<proteinExistence type="inferred from homology"/>
<protein>
    <recommendedName>
        <fullName evidence="1">Ribose-5-phosphate isomerase A</fullName>
        <ecNumber evidence="1">5.3.1.6</ecNumber>
    </recommendedName>
    <alternativeName>
        <fullName evidence="1">Phosphoriboisomerase A</fullName>
        <shortName evidence="1">PRI</shortName>
    </alternativeName>
</protein>
<name>RPIA_XANE5</name>
<gene>
    <name evidence="1" type="primary">rpiA</name>
    <name type="ordered locus">XCV3528</name>
</gene>
<sequence length="215" mass="22873">MSEAKRLAAEKAIDYVEDGMIVGVGTGSTVAYFIDALGRIGHRIKGAVSSSEQSTARLRQHGVEVLDLNHTGNLSLYVDGADECDPNRCLIKGGGAALTREKIIAEASERFICIVDPSKQVPVLGKFPLPVEVIPMARSLVARQILALTGGQPVWRDGVVTDNGNVVLDVHHLQITDPVGLERSLNQIPGVVCVGLFARRPADVVIVGGEPPQVI</sequence>
<accession>Q3BPQ4</accession>
<feature type="chain" id="PRO_1000017027" description="Ribose-5-phosphate isomerase A">
    <location>
        <begin position="1"/>
        <end position="215"/>
    </location>
</feature>
<feature type="active site" description="Proton acceptor" evidence="1">
    <location>
        <position position="101"/>
    </location>
</feature>
<feature type="binding site" evidence="1">
    <location>
        <begin position="26"/>
        <end position="29"/>
    </location>
    <ligand>
        <name>substrate</name>
    </ligand>
</feature>
<feature type="binding site" evidence="1">
    <location>
        <begin position="79"/>
        <end position="82"/>
    </location>
    <ligand>
        <name>substrate</name>
    </ligand>
</feature>
<feature type="binding site" evidence="1">
    <location>
        <begin position="92"/>
        <end position="95"/>
    </location>
    <ligand>
        <name>substrate</name>
    </ligand>
</feature>
<feature type="binding site" evidence="1">
    <location>
        <position position="119"/>
    </location>
    <ligand>
        <name>substrate</name>
    </ligand>
</feature>
<organism>
    <name type="scientific">Xanthomonas euvesicatoria pv. vesicatoria (strain 85-10)</name>
    <name type="common">Xanthomonas campestris pv. vesicatoria</name>
    <dbReference type="NCBI Taxonomy" id="316273"/>
    <lineage>
        <taxon>Bacteria</taxon>
        <taxon>Pseudomonadati</taxon>
        <taxon>Pseudomonadota</taxon>
        <taxon>Gammaproteobacteria</taxon>
        <taxon>Lysobacterales</taxon>
        <taxon>Lysobacteraceae</taxon>
        <taxon>Xanthomonas</taxon>
    </lineage>
</organism>
<reference key="1">
    <citation type="journal article" date="2005" name="J. Bacteriol.">
        <title>Insights into genome plasticity and pathogenicity of the plant pathogenic Bacterium Xanthomonas campestris pv. vesicatoria revealed by the complete genome sequence.</title>
        <authorList>
            <person name="Thieme F."/>
            <person name="Koebnik R."/>
            <person name="Bekel T."/>
            <person name="Berger C."/>
            <person name="Boch J."/>
            <person name="Buettner D."/>
            <person name="Caldana C."/>
            <person name="Gaigalat L."/>
            <person name="Goesmann A."/>
            <person name="Kay S."/>
            <person name="Kirchner O."/>
            <person name="Lanz C."/>
            <person name="Linke B."/>
            <person name="McHardy A.C."/>
            <person name="Meyer F."/>
            <person name="Mittenhuber G."/>
            <person name="Nies D.H."/>
            <person name="Niesbach-Kloesgen U."/>
            <person name="Patschkowski T."/>
            <person name="Rueckert C."/>
            <person name="Rupp O."/>
            <person name="Schneiker S."/>
            <person name="Schuster S.C."/>
            <person name="Vorhoelter F.J."/>
            <person name="Weber E."/>
            <person name="Puehler A."/>
            <person name="Bonas U."/>
            <person name="Bartels D."/>
            <person name="Kaiser O."/>
        </authorList>
    </citation>
    <scope>NUCLEOTIDE SEQUENCE [LARGE SCALE GENOMIC DNA]</scope>
    <source>
        <strain>85-10</strain>
    </source>
</reference>
<keyword id="KW-0413">Isomerase</keyword>
<comment type="function">
    <text evidence="1">Catalyzes the reversible conversion of ribose-5-phosphate to ribulose 5-phosphate.</text>
</comment>
<comment type="catalytic activity">
    <reaction evidence="1">
        <text>aldehydo-D-ribose 5-phosphate = D-ribulose 5-phosphate</text>
        <dbReference type="Rhea" id="RHEA:14657"/>
        <dbReference type="ChEBI" id="CHEBI:58121"/>
        <dbReference type="ChEBI" id="CHEBI:58273"/>
        <dbReference type="EC" id="5.3.1.6"/>
    </reaction>
</comment>
<comment type="pathway">
    <text evidence="1">Carbohydrate degradation; pentose phosphate pathway; D-ribose 5-phosphate from D-ribulose 5-phosphate (non-oxidative stage): step 1/1.</text>
</comment>
<comment type="subunit">
    <text evidence="1">Homodimer.</text>
</comment>
<comment type="similarity">
    <text evidence="1">Belongs to the ribose 5-phosphate isomerase family.</text>
</comment>
<evidence type="ECO:0000255" key="1">
    <source>
        <dbReference type="HAMAP-Rule" id="MF_00170"/>
    </source>
</evidence>
<dbReference type="EC" id="5.3.1.6" evidence="1"/>
<dbReference type="EMBL" id="AM039952">
    <property type="protein sequence ID" value="CAJ25259.1"/>
    <property type="molecule type" value="Genomic_DNA"/>
</dbReference>
<dbReference type="RefSeq" id="WP_011348472.1">
    <property type="nucleotide sequence ID" value="NZ_CP017190.1"/>
</dbReference>
<dbReference type="SMR" id="Q3BPQ4"/>
<dbReference type="STRING" id="456327.BJD11_05095"/>
<dbReference type="GeneID" id="97511607"/>
<dbReference type="KEGG" id="xcv:XCV3528"/>
<dbReference type="eggNOG" id="COG0120">
    <property type="taxonomic scope" value="Bacteria"/>
</dbReference>
<dbReference type="HOGENOM" id="CLU_056590_1_1_6"/>
<dbReference type="UniPathway" id="UPA00115">
    <property type="reaction ID" value="UER00412"/>
</dbReference>
<dbReference type="Proteomes" id="UP000007069">
    <property type="component" value="Chromosome"/>
</dbReference>
<dbReference type="GO" id="GO:0005829">
    <property type="term" value="C:cytosol"/>
    <property type="evidence" value="ECO:0007669"/>
    <property type="project" value="TreeGrafter"/>
</dbReference>
<dbReference type="GO" id="GO:0004751">
    <property type="term" value="F:ribose-5-phosphate isomerase activity"/>
    <property type="evidence" value="ECO:0007669"/>
    <property type="project" value="UniProtKB-UniRule"/>
</dbReference>
<dbReference type="GO" id="GO:0006014">
    <property type="term" value="P:D-ribose metabolic process"/>
    <property type="evidence" value="ECO:0007669"/>
    <property type="project" value="TreeGrafter"/>
</dbReference>
<dbReference type="GO" id="GO:0009052">
    <property type="term" value="P:pentose-phosphate shunt, non-oxidative branch"/>
    <property type="evidence" value="ECO:0007669"/>
    <property type="project" value="UniProtKB-UniRule"/>
</dbReference>
<dbReference type="CDD" id="cd01398">
    <property type="entry name" value="RPI_A"/>
    <property type="match status" value="1"/>
</dbReference>
<dbReference type="FunFam" id="3.30.70.260:FF:000004">
    <property type="entry name" value="Ribose-5-phosphate isomerase A"/>
    <property type="match status" value="1"/>
</dbReference>
<dbReference type="FunFam" id="3.40.50.1360:FF:000001">
    <property type="entry name" value="Ribose-5-phosphate isomerase A"/>
    <property type="match status" value="1"/>
</dbReference>
<dbReference type="Gene3D" id="3.30.70.260">
    <property type="match status" value="1"/>
</dbReference>
<dbReference type="Gene3D" id="3.40.50.1360">
    <property type="match status" value="1"/>
</dbReference>
<dbReference type="HAMAP" id="MF_00170">
    <property type="entry name" value="Rib_5P_isom_A"/>
    <property type="match status" value="1"/>
</dbReference>
<dbReference type="InterPro" id="IPR037171">
    <property type="entry name" value="NagB/RpiA_transferase-like"/>
</dbReference>
<dbReference type="InterPro" id="IPR020672">
    <property type="entry name" value="Ribose5P_isomerase_typA_subgr"/>
</dbReference>
<dbReference type="InterPro" id="IPR004788">
    <property type="entry name" value="Ribose5P_isomerase_type_A"/>
</dbReference>
<dbReference type="NCBIfam" id="NF001924">
    <property type="entry name" value="PRK00702.1"/>
    <property type="match status" value="1"/>
</dbReference>
<dbReference type="NCBIfam" id="TIGR00021">
    <property type="entry name" value="rpiA"/>
    <property type="match status" value="1"/>
</dbReference>
<dbReference type="PANTHER" id="PTHR11934">
    <property type="entry name" value="RIBOSE-5-PHOSPHATE ISOMERASE"/>
    <property type="match status" value="1"/>
</dbReference>
<dbReference type="PANTHER" id="PTHR11934:SF0">
    <property type="entry name" value="RIBOSE-5-PHOSPHATE ISOMERASE"/>
    <property type="match status" value="1"/>
</dbReference>
<dbReference type="Pfam" id="PF06026">
    <property type="entry name" value="Rib_5-P_isom_A"/>
    <property type="match status" value="1"/>
</dbReference>
<dbReference type="SUPFAM" id="SSF75445">
    <property type="entry name" value="D-ribose-5-phosphate isomerase (RpiA), lid domain"/>
    <property type="match status" value="1"/>
</dbReference>
<dbReference type="SUPFAM" id="SSF100950">
    <property type="entry name" value="NagB/RpiA/CoA transferase-like"/>
    <property type="match status" value="1"/>
</dbReference>